<dbReference type="EMBL" id="CP001033">
    <property type="protein sequence ID" value="ACB91423.1"/>
    <property type="molecule type" value="Genomic_DNA"/>
</dbReference>
<dbReference type="RefSeq" id="WP_000864220.1">
    <property type="nucleotide sequence ID" value="NC_010582.1"/>
</dbReference>
<dbReference type="SMR" id="B2INM2"/>
<dbReference type="GeneID" id="45652575"/>
<dbReference type="KEGG" id="spw:SPCG_2171"/>
<dbReference type="HOGENOM" id="CLU_078938_3_2_9"/>
<dbReference type="GO" id="GO:1990904">
    <property type="term" value="C:ribonucleoprotein complex"/>
    <property type="evidence" value="ECO:0007669"/>
    <property type="project" value="UniProtKB-KW"/>
</dbReference>
<dbReference type="GO" id="GO:0005840">
    <property type="term" value="C:ribosome"/>
    <property type="evidence" value="ECO:0007669"/>
    <property type="project" value="UniProtKB-KW"/>
</dbReference>
<dbReference type="GO" id="GO:0019843">
    <property type="term" value="F:rRNA binding"/>
    <property type="evidence" value="ECO:0007669"/>
    <property type="project" value="UniProtKB-UniRule"/>
</dbReference>
<dbReference type="GO" id="GO:0003735">
    <property type="term" value="F:structural constituent of ribosome"/>
    <property type="evidence" value="ECO:0007669"/>
    <property type="project" value="InterPro"/>
</dbReference>
<dbReference type="GO" id="GO:0006412">
    <property type="term" value="P:translation"/>
    <property type="evidence" value="ECO:0007669"/>
    <property type="project" value="UniProtKB-UniRule"/>
</dbReference>
<dbReference type="FunFam" id="3.10.430.100:FF:000009">
    <property type="entry name" value="50S ribosomal protein L9"/>
    <property type="match status" value="1"/>
</dbReference>
<dbReference type="FunFam" id="3.40.5.10:FF:000002">
    <property type="entry name" value="50S ribosomal protein L9"/>
    <property type="match status" value="1"/>
</dbReference>
<dbReference type="Gene3D" id="3.10.430.100">
    <property type="entry name" value="Ribosomal protein L9, C-terminal domain"/>
    <property type="match status" value="1"/>
</dbReference>
<dbReference type="Gene3D" id="3.40.5.10">
    <property type="entry name" value="Ribosomal protein L9, N-terminal domain"/>
    <property type="match status" value="1"/>
</dbReference>
<dbReference type="HAMAP" id="MF_00503">
    <property type="entry name" value="Ribosomal_bL9"/>
    <property type="match status" value="1"/>
</dbReference>
<dbReference type="InterPro" id="IPR000244">
    <property type="entry name" value="Ribosomal_bL9"/>
</dbReference>
<dbReference type="InterPro" id="IPR009027">
    <property type="entry name" value="Ribosomal_bL9/RNase_H1_N"/>
</dbReference>
<dbReference type="InterPro" id="IPR020594">
    <property type="entry name" value="Ribosomal_bL9_bac/chp"/>
</dbReference>
<dbReference type="InterPro" id="IPR020069">
    <property type="entry name" value="Ribosomal_bL9_C"/>
</dbReference>
<dbReference type="InterPro" id="IPR036791">
    <property type="entry name" value="Ribosomal_bL9_C_sf"/>
</dbReference>
<dbReference type="InterPro" id="IPR020070">
    <property type="entry name" value="Ribosomal_bL9_N"/>
</dbReference>
<dbReference type="InterPro" id="IPR036935">
    <property type="entry name" value="Ribosomal_bL9_N_sf"/>
</dbReference>
<dbReference type="NCBIfam" id="TIGR00158">
    <property type="entry name" value="L9"/>
    <property type="match status" value="1"/>
</dbReference>
<dbReference type="PANTHER" id="PTHR21368">
    <property type="entry name" value="50S RIBOSOMAL PROTEIN L9"/>
    <property type="match status" value="1"/>
</dbReference>
<dbReference type="Pfam" id="PF03948">
    <property type="entry name" value="Ribosomal_L9_C"/>
    <property type="match status" value="1"/>
</dbReference>
<dbReference type="Pfam" id="PF01281">
    <property type="entry name" value="Ribosomal_L9_N"/>
    <property type="match status" value="1"/>
</dbReference>
<dbReference type="SUPFAM" id="SSF55658">
    <property type="entry name" value="L9 N-domain-like"/>
    <property type="match status" value="1"/>
</dbReference>
<dbReference type="SUPFAM" id="SSF55653">
    <property type="entry name" value="Ribosomal protein L9 C-domain"/>
    <property type="match status" value="1"/>
</dbReference>
<dbReference type="PROSITE" id="PS00651">
    <property type="entry name" value="RIBOSOMAL_L9"/>
    <property type="match status" value="1"/>
</dbReference>
<name>RL9_STRPS</name>
<protein>
    <recommendedName>
        <fullName evidence="1">Large ribosomal subunit protein bL9</fullName>
    </recommendedName>
    <alternativeName>
        <fullName evidence="2">50S ribosomal protein L9</fullName>
    </alternativeName>
</protein>
<feature type="chain" id="PRO_1000126980" description="Large ribosomal subunit protein bL9">
    <location>
        <begin position="1"/>
        <end position="150"/>
    </location>
</feature>
<evidence type="ECO:0000255" key="1">
    <source>
        <dbReference type="HAMAP-Rule" id="MF_00503"/>
    </source>
</evidence>
<evidence type="ECO:0000305" key="2"/>
<accession>B2INM2</accession>
<keyword id="KW-0687">Ribonucleoprotein</keyword>
<keyword id="KW-0689">Ribosomal protein</keyword>
<keyword id="KW-0694">RNA-binding</keyword>
<keyword id="KW-0699">rRNA-binding</keyword>
<gene>
    <name evidence="1" type="primary">rplI</name>
    <name type="ordered locus">SPCG_2171</name>
</gene>
<proteinExistence type="inferred from homology"/>
<comment type="function">
    <text evidence="1">Binds to the 23S rRNA.</text>
</comment>
<comment type="similarity">
    <text evidence="1">Belongs to the bacterial ribosomal protein bL9 family.</text>
</comment>
<sequence>MKVIFLADVKGKGKKGEIKEVPTGYAQNFLIKKNLAKEATAQAVGELRGKQKSEEKAHAEMIAEGKAIKAQLEAEETVVEFVEKVGPDGRTFGSITNKKIAEELQKQFGIKIDKRHIQVQAPIRAVGLIDVPVKIYQDITSVINLRVKEG</sequence>
<organism>
    <name type="scientific">Streptococcus pneumoniae (strain CGSP14)</name>
    <dbReference type="NCBI Taxonomy" id="516950"/>
    <lineage>
        <taxon>Bacteria</taxon>
        <taxon>Bacillati</taxon>
        <taxon>Bacillota</taxon>
        <taxon>Bacilli</taxon>
        <taxon>Lactobacillales</taxon>
        <taxon>Streptococcaceae</taxon>
        <taxon>Streptococcus</taxon>
    </lineage>
</organism>
<reference key="1">
    <citation type="journal article" date="2009" name="BMC Genomics">
        <title>Genome evolution driven by host adaptations results in a more virulent and antimicrobial-resistant Streptococcus pneumoniae serotype 14.</title>
        <authorList>
            <person name="Ding F."/>
            <person name="Tang P."/>
            <person name="Hsu M.-H."/>
            <person name="Cui P."/>
            <person name="Hu S."/>
            <person name="Yu J."/>
            <person name="Chiu C.-H."/>
        </authorList>
    </citation>
    <scope>NUCLEOTIDE SEQUENCE [LARGE SCALE GENOMIC DNA]</scope>
    <source>
        <strain>CGSP14</strain>
    </source>
</reference>